<keyword id="KW-0131">Cell cycle</keyword>
<keyword id="KW-0132">Cell division</keyword>
<keyword id="KW-0574">Periplasm</keyword>
<keyword id="KW-1185">Reference proteome</keyword>
<keyword id="KW-0732">Signal</keyword>
<protein>
    <recommendedName>
        <fullName evidence="1">Tol-Pal system protein TolB</fullName>
    </recommendedName>
</protein>
<evidence type="ECO:0000255" key="1">
    <source>
        <dbReference type="HAMAP-Rule" id="MF_00671"/>
    </source>
</evidence>
<reference key="1">
    <citation type="journal article" date="2008" name="Appl. Environ. Microbiol.">
        <title>The genome of Polaromonas sp. strain JS666: insights into the evolution of a hydrocarbon- and xenobiotic-degrading bacterium, and features of relevance to biotechnology.</title>
        <authorList>
            <person name="Mattes T.E."/>
            <person name="Alexander A.K."/>
            <person name="Richardson P.M."/>
            <person name="Munk A.C."/>
            <person name="Han C.S."/>
            <person name="Stothard P."/>
            <person name="Coleman N.V."/>
        </authorList>
    </citation>
    <scope>NUCLEOTIDE SEQUENCE [LARGE SCALE GENOMIC DNA]</scope>
    <source>
        <strain>JS666 / ATCC BAA-500</strain>
    </source>
</reference>
<proteinExistence type="inferred from homology"/>
<dbReference type="EMBL" id="CP000316">
    <property type="protein sequence ID" value="ABE43914.1"/>
    <property type="molecule type" value="Genomic_DNA"/>
</dbReference>
<dbReference type="RefSeq" id="WP_011482913.1">
    <property type="nucleotide sequence ID" value="NC_007948.1"/>
</dbReference>
<dbReference type="SMR" id="Q12C28"/>
<dbReference type="STRING" id="296591.Bpro_1984"/>
<dbReference type="KEGG" id="pol:Bpro_1984"/>
<dbReference type="eggNOG" id="COG0823">
    <property type="taxonomic scope" value="Bacteria"/>
</dbReference>
<dbReference type="HOGENOM" id="CLU_047123_0_0_4"/>
<dbReference type="OrthoDB" id="9802240at2"/>
<dbReference type="Proteomes" id="UP000001983">
    <property type="component" value="Chromosome"/>
</dbReference>
<dbReference type="GO" id="GO:0042597">
    <property type="term" value="C:periplasmic space"/>
    <property type="evidence" value="ECO:0007669"/>
    <property type="project" value="UniProtKB-SubCell"/>
</dbReference>
<dbReference type="GO" id="GO:0051301">
    <property type="term" value="P:cell division"/>
    <property type="evidence" value="ECO:0007669"/>
    <property type="project" value="UniProtKB-UniRule"/>
</dbReference>
<dbReference type="GO" id="GO:0017038">
    <property type="term" value="P:protein import"/>
    <property type="evidence" value="ECO:0007669"/>
    <property type="project" value="InterPro"/>
</dbReference>
<dbReference type="Gene3D" id="2.120.10.30">
    <property type="entry name" value="TolB, C-terminal domain"/>
    <property type="match status" value="1"/>
</dbReference>
<dbReference type="Gene3D" id="3.40.50.10070">
    <property type="entry name" value="TolB, N-terminal domain"/>
    <property type="match status" value="1"/>
</dbReference>
<dbReference type="HAMAP" id="MF_00671">
    <property type="entry name" value="TolB"/>
    <property type="match status" value="1"/>
</dbReference>
<dbReference type="InterPro" id="IPR011042">
    <property type="entry name" value="6-blade_b-propeller_TolB-like"/>
</dbReference>
<dbReference type="InterPro" id="IPR011659">
    <property type="entry name" value="PD40"/>
</dbReference>
<dbReference type="InterPro" id="IPR014167">
    <property type="entry name" value="Tol-Pal_TolB"/>
</dbReference>
<dbReference type="InterPro" id="IPR007195">
    <property type="entry name" value="TolB_N"/>
</dbReference>
<dbReference type="NCBIfam" id="TIGR02800">
    <property type="entry name" value="propeller_TolB"/>
    <property type="match status" value="1"/>
</dbReference>
<dbReference type="PANTHER" id="PTHR36842:SF1">
    <property type="entry name" value="PROTEIN TOLB"/>
    <property type="match status" value="1"/>
</dbReference>
<dbReference type="PANTHER" id="PTHR36842">
    <property type="entry name" value="PROTEIN TOLB HOMOLOG"/>
    <property type="match status" value="1"/>
</dbReference>
<dbReference type="Pfam" id="PF07676">
    <property type="entry name" value="PD40"/>
    <property type="match status" value="5"/>
</dbReference>
<dbReference type="Pfam" id="PF04052">
    <property type="entry name" value="TolB_N"/>
    <property type="match status" value="1"/>
</dbReference>
<dbReference type="SUPFAM" id="SSF52964">
    <property type="entry name" value="TolB, N-terminal domain"/>
    <property type="match status" value="1"/>
</dbReference>
<dbReference type="SUPFAM" id="SSF69304">
    <property type="entry name" value="Tricorn protease N-terminal domain"/>
    <property type="match status" value="1"/>
</dbReference>
<organism>
    <name type="scientific">Polaromonas sp. (strain JS666 / ATCC BAA-500)</name>
    <dbReference type="NCBI Taxonomy" id="296591"/>
    <lineage>
        <taxon>Bacteria</taxon>
        <taxon>Pseudomonadati</taxon>
        <taxon>Pseudomonadota</taxon>
        <taxon>Betaproteobacteria</taxon>
        <taxon>Burkholderiales</taxon>
        <taxon>Comamonadaceae</taxon>
        <taxon>Polaromonas</taxon>
    </lineage>
</organism>
<feature type="signal peptide" evidence="1">
    <location>
        <begin position="1"/>
        <end position="25"/>
    </location>
</feature>
<feature type="chain" id="PRO_0000259068" description="Tol-Pal system protein TolB" evidence="1">
    <location>
        <begin position="26"/>
        <end position="426"/>
    </location>
</feature>
<gene>
    <name evidence="1" type="primary">tolB</name>
    <name type="ordered locus">Bpro_1984</name>
</gene>
<sequence>MSITPSLSRRTVMSLLAAGLSPAFAQFRVEVSGVGLTQLPIAIASFRGEVQAPQKIGNIVRADLERSGMFRPVDTAGIVADENTRPDLAIWRQKGADAMVTGSVSPLADGRFDVRLRLWDIVRGQDLGGQSYTVAQADLRLSAHRISDFVYEKLTGEKGIFSTRIAYVTKTAQRFNLWVADSDGEGAQSALTSPEPIISPSWSPNGSQLAYVSFESRKPVIYAHDVATGKRRLLANFRGSNSAPAWSPDGKQLVATLSRDGGSQIYALGLSGGDPKRLTQSSSIDTEPAYSPDGRYIYFVSDRGGAPQIYRMSPGGGNPERVTFTGGYNISPAISPDGRWLAYVSRVGGAFKLHVMELASGTATPITDTTADESPSFAPNSRLIVYATQQQGREALMTTTLDGKIKARLSGAGGDIREPDWGPFQR</sequence>
<comment type="function">
    <text evidence="1">Part of the Tol-Pal system, which plays a role in outer membrane invagination during cell division and is important for maintaining outer membrane integrity.</text>
</comment>
<comment type="subunit">
    <text evidence="1">The Tol-Pal system is composed of five core proteins: the inner membrane proteins TolA, TolQ and TolR, the periplasmic protein TolB and the outer membrane protein Pal. They form a network linking the inner and outer membranes and the peptidoglycan layer.</text>
</comment>
<comment type="subcellular location">
    <subcellularLocation>
        <location evidence="1">Periplasm</location>
    </subcellularLocation>
</comment>
<comment type="similarity">
    <text evidence="1">Belongs to the TolB family.</text>
</comment>
<accession>Q12C28</accession>
<name>TOLB_POLSJ</name>